<evidence type="ECO:0000255" key="1">
    <source>
        <dbReference type="HAMAP-Rule" id="MF_00385"/>
    </source>
</evidence>
<evidence type="ECO:0000256" key="2">
    <source>
        <dbReference type="SAM" id="MobiDB-lite"/>
    </source>
</evidence>
<evidence type="ECO:0000305" key="3"/>
<keyword id="KW-0687">Ribonucleoprotein</keyword>
<keyword id="KW-0689">Ribosomal protein</keyword>
<reference key="1">
    <citation type="submission" date="2008-04" db="EMBL/GenBank/DDBJ databases">
        <title>Complete sequence of chromosome of Methylobacterium populi BJ001.</title>
        <authorList>
            <consortium name="US DOE Joint Genome Institute"/>
            <person name="Copeland A."/>
            <person name="Lucas S."/>
            <person name="Lapidus A."/>
            <person name="Glavina del Rio T."/>
            <person name="Dalin E."/>
            <person name="Tice H."/>
            <person name="Bruce D."/>
            <person name="Goodwin L."/>
            <person name="Pitluck S."/>
            <person name="Chertkov O."/>
            <person name="Brettin T."/>
            <person name="Detter J.C."/>
            <person name="Han C."/>
            <person name="Kuske C.R."/>
            <person name="Schmutz J."/>
            <person name="Larimer F."/>
            <person name="Land M."/>
            <person name="Hauser L."/>
            <person name="Kyrpides N."/>
            <person name="Mikhailova N."/>
            <person name="Marx C."/>
            <person name="Richardson P."/>
        </authorList>
    </citation>
    <scope>NUCLEOTIDE SEQUENCE [LARGE SCALE GENOMIC DNA]</scope>
    <source>
        <strain>ATCC BAA-705 / NCIMB 13946 / BJ001</strain>
    </source>
</reference>
<organism>
    <name type="scientific">Methylorubrum populi (strain ATCC BAA-705 / NCIMB 13946 / BJ001)</name>
    <name type="common">Methylobacterium populi</name>
    <dbReference type="NCBI Taxonomy" id="441620"/>
    <lineage>
        <taxon>Bacteria</taxon>
        <taxon>Pseudomonadati</taxon>
        <taxon>Pseudomonadota</taxon>
        <taxon>Alphaproteobacteria</taxon>
        <taxon>Hyphomicrobiales</taxon>
        <taxon>Methylobacteriaceae</taxon>
        <taxon>Methylorubrum</taxon>
    </lineage>
</organism>
<protein>
    <recommendedName>
        <fullName evidence="1">Small ribosomal subunit protein bS16</fullName>
    </recommendedName>
    <alternativeName>
        <fullName evidence="3">30S ribosomal protein S16</fullName>
    </alternativeName>
</protein>
<comment type="similarity">
    <text evidence="1">Belongs to the bacterial ribosomal protein bS16 family.</text>
</comment>
<gene>
    <name evidence="1" type="primary">rpsP</name>
    <name type="ordered locus">Mpop_0632</name>
</gene>
<feature type="chain" id="PRO_1000196434" description="Small ribosomal subunit protein bS16">
    <location>
        <begin position="1"/>
        <end position="120"/>
    </location>
</feature>
<feature type="region of interest" description="Disordered" evidence="2">
    <location>
        <begin position="81"/>
        <end position="120"/>
    </location>
</feature>
<feature type="compositionally biased region" description="Basic and acidic residues" evidence="2">
    <location>
        <begin position="95"/>
        <end position="110"/>
    </location>
</feature>
<feature type="compositionally biased region" description="Low complexity" evidence="2">
    <location>
        <begin position="111"/>
        <end position="120"/>
    </location>
</feature>
<sequence>MSLKIRLTRGGAKKRPYYRIVVADARAPRDGRFIDKVGAYDPMKAKDDPARIVLDNEKIQSWLAKGAQPTDRVLRFLDAAGLAKRPARNNPQKAEPGEKSKERAAKRAEKAAAPAEDAAA</sequence>
<accession>B1ZL67</accession>
<name>RS16_METPB</name>
<proteinExistence type="inferred from homology"/>
<dbReference type="EMBL" id="CP001029">
    <property type="protein sequence ID" value="ACB78810.1"/>
    <property type="molecule type" value="Genomic_DNA"/>
</dbReference>
<dbReference type="RefSeq" id="WP_012452566.1">
    <property type="nucleotide sequence ID" value="NC_010725.1"/>
</dbReference>
<dbReference type="SMR" id="B1ZL67"/>
<dbReference type="STRING" id="441620.Mpop_0632"/>
<dbReference type="KEGG" id="mpo:Mpop_0632"/>
<dbReference type="eggNOG" id="COG0228">
    <property type="taxonomic scope" value="Bacteria"/>
</dbReference>
<dbReference type="HOGENOM" id="CLU_100590_3_1_5"/>
<dbReference type="OrthoDB" id="9807878at2"/>
<dbReference type="Proteomes" id="UP000007136">
    <property type="component" value="Chromosome"/>
</dbReference>
<dbReference type="GO" id="GO:0005737">
    <property type="term" value="C:cytoplasm"/>
    <property type="evidence" value="ECO:0007669"/>
    <property type="project" value="UniProtKB-ARBA"/>
</dbReference>
<dbReference type="GO" id="GO:0015935">
    <property type="term" value="C:small ribosomal subunit"/>
    <property type="evidence" value="ECO:0007669"/>
    <property type="project" value="TreeGrafter"/>
</dbReference>
<dbReference type="GO" id="GO:0003735">
    <property type="term" value="F:structural constituent of ribosome"/>
    <property type="evidence" value="ECO:0007669"/>
    <property type="project" value="InterPro"/>
</dbReference>
<dbReference type="GO" id="GO:0006412">
    <property type="term" value="P:translation"/>
    <property type="evidence" value="ECO:0007669"/>
    <property type="project" value="UniProtKB-UniRule"/>
</dbReference>
<dbReference type="Gene3D" id="3.30.1320.10">
    <property type="match status" value="1"/>
</dbReference>
<dbReference type="HAMAP" id="MF_00385">
    <property type="entry name" value="Ribosomal_bS16"/>
    <property type="match status" value="1"/>
</dbReference>
<dbReference type="InterPro" id="IPR000307">
    <property type="entry name" value="Ribosomal_bS16"/>
</dbReference>
<dbReference type="InterPro" id="IPR020592">
    <property type="entry name" value="Ribosomal_bS16_CS"/>
</dbReference>
<dbReference type="InterPro" id="IPR023803">
    <property type="entry name" value="Ribosomal_bS16_dom_sf"/>
</dbReference>
<dbReference type="NCBIfam" id="TIGR00002">
    <property type="entry name" value="S16"/>
    <property type="match status" value="1"/>
</dbReference>
<dbReference type="PANTHER" id="PTHR12919">
    <property type="entry name" value="30S RIBOSOMAL PROTEIN S16"/>
    <property type="match status" value="1"/>
</dbReference>
<dbReference type="PANTHER" id="PTHR12919:SF20">
    <property type="entry name" value="SMALL RIBOSOMAL SUBUNIT PROTEIN BS16M"/>
    <property type="match status" value="1"/>
</dbReference>
<dbReference type="Pfam" id="PF00886">
    <property type="entry name" value="Ribosomal_S16"/>
    <property type="match status" value="1"/>
</dbReference>
<dbReference type="SUPFAM" id="SSF54565">
    <property type="entry name" value="Ribosomal protein S16"/>
    <property type="match status" value="1"/>
</dbReference>
<dbReference type="PROSITE" id="PS00732">
    <property type="entry name" value="RIBOSOMAL_S16"/>
    <property type="match status" value="1"/>
</dbReference>